<name>MSRB_YERPY</name>
<protein>
    <recommendedName>
        <fullName evidence="1">Peptide methionine sulfoxide reductase MsrB</fullName>
        <ecNumber evidence="1">1.8.4.12</ecNumber>
    </recommendedName>
    <alternativeName>
        <fullName evidence="1">Peptide-methionine (R)-S-oxide reductase</fullName>
    </alternativeName>
</protein>
<keyword id="KW-0479">Metal-binding</keyword>
<keyword id="KW-0560">Oxidoreductase</keyword>
<keyword id="KW-0862">Zinc</keyword>
<sequence length="137" mass="15515">MAKELNPTENIEKLSDIQRYVTQERGTEAPFTGKLLHNKRDGVYQCLCCHQPLFISESKFDSGCGWPSFYQPIDADSIRYIDDYSHNMHRIEIRCGNCDAHLGHVFPDGPQPTGERYCINSASLNFVDDQNGEQTAG</sequence>
<accession>B1JLG2</accession>
<organism>
    <name type="scientific">Yersinia pseudotuberculosis serotype O:3 (strain YPIII)</name>
    <dbReference type="NCBI Taxonomy" id="502800"/>
    <lineage>
        <taxon>Bacteria</taxon>
        <taxon>Pseudomonadati</taxon>
        <taxon>Pseudomonadota</taxon>
        <taxon>Gammaproteobacteria</taxon>
        <taxon>Enterobacterales</taxon>
        <taxon>Yersiniaceae</taxon>
        <taxon>Yersinia</taxon>
    </lineage>
</organism>
<feature type="chain" id="PRO_1000145387" description="Peptide methionine sulfoxide reductase MsrB">
    <location>
        <begin position="1"/>
        <end position="137"/>
    </location>
</feature>
<feature type="domain" description="MsrB" evidence="2">
    <location>
        <begin position="7"/>
        <end position="129"/>
    </location>
</feature>
<feature type="active site" description="Nucleophile" evidence="2">
    <location>
        <position position="118"/>
    </location>
</feature>
<feature type="binding site" evidence="2">
    <location>
        <position position="46"/>
    </location>
    <ligand>
        <name>Zn(2+)</name>
        <dbReference type="ChEBI" id="CHEBI:29105"/>
    </ligand>
</feature>
<feature type="binding site" evidence="2">
    <location>
        <position position="49"/>
    </location>
    <ligand>
        <name>Zn(2+)</name>
        <dbReference type="ChEBI" id="CHEBI:29105"/>
    </ligand>
</feature>
<feature type="binding site" evidence="2">
    <location>
        <position position="95"/>
    </location>
    <ligand>
        <name>Zn(2+)</name>
        <dbReference type="ChEBI" id="CHEBI:29105"/>
    </ligand>
</feature>
<feature type="binding site" evidence="2">
    <location>
        <position position="98"/>
    </location>
    <ligand>
        <name>Zn(2+)</name>
        <dbReference type="ChEBI" id="CHEBI:29105"/>
    </ligand>
</feature>
<reference key="1">
    <citation type="submission" date="2008-02" db="EMBL/GenBank/DDBJ databases">
        <title>Complete sequence of Yersinia pseudotuberculosis YPIII.</title>
        <authorList>
            <consortium name="US DOE Joint Genome Institute"/>
            <person name="Copeland A."/>
            <person name="Lucas S."/>
            <person name="Lapidus A."/>
            <person name="Glavina del Rio T."/>
            <person name="Dalin E."/>
            <person name="Tice H."/>
            <person name="Bruce D."/>
            <person name="Goodwin L."/>
            <person name="Pitluck S."/>
            <person name="Munk A.C."/>
            <person name="Brettin T."/>
            <person name="Detter J.C."/>
            <person name="Han C."/>
            <person name="Tapia R."/>
            <person name="Schmutz J."/>
            <person name="Larimer F."/>
            <person name="Land M."/>
            <person name="Hauser L."/>
            <person name="Challacombe J.F."/>
            <person name="Green L."/>
            <person name="Lindler L.E."/>
            <person name="Nikolich M.P."/>
            <person name="Richardson P."/>
        </authorList>
    </citation>
    <scope>NUCLEOTIDE SEQUENCE [LARGE SCALE GENOMIC DNA]</scope>
    <source>
        <strain>YPIII</strain>
    </source>
</reference>
<evidence type="ECO:0000255" key="1">
    <source>
        <dbReference type="HAMAP-Rule" id="MF_01400"/>
    </source>
</evidence>
<evidence type="ECO:0000255" key="2">
    <source>
        <dbReference type="PROSITE-ProRule" id="PRU01126"/>
    </source>
</evidence>
<proteinExistence type="inferred from homology"/>
<comment type="catalytic activity">
    <reaction evidence="1">
        <text>L-methionyl-[protein] + [thioredoxin]-disulfide + H2O = L-methionyl-(R)-S-oxide-[protein] + [thioredoxin]-dithiol</text>
        <dbReference type="Rhea" id="RHEA:24164"/>
        <dbReference type="Rhea" id="RHEA-COMP:10698"/>
        <dbReference type="Rhea" id="RHEA-COMP:10700"/>
        <dbReference type="Rhea" id="RHEA-COMP:12313"/>
        <dbReference type="Rhea" id="RHEA-COMP:12314"/>
        <dbReference type="ChEBI" id="CHEBI:15377"/>
        <dbReference type="ChEBI" id="CHEBI:16044"/>
        <dbReference type="ChEBI" id="CHEBI:29950"/>
        <dbReference type="ChEBI" id="CHEBI:45764"/>
        <dbReference type="ChEBI" id="CHEBI:50058"/>
        <dbReference type="EC" id="1.8.4.12"/>
    </reaction>
</comment>
<comment type="cofactor">
    <cofactor evidence="1">
        <name>Zn(2+)</name>
        <dbReference type="ChEBI" id="CHEBI:29105"/>
    </cofactor>
    <text evidence="1">Binds 1 zinc ion per subunit. The zinc ion is important for the structural integrity of the protein.</text>
</comment>
<comment type="similarity">
    <text evidence="1">Belongs to the MsrB Met sulfoxide reductase family.</text>
</comment>
<gene>
    <name evidence="1" type="primary">msrB</name>
    <name type="ordered locus">YPK_2095</name>
</gene>
<dbReference type="EC" id="1.8.4.12" evidence="1"/>
<dbReference type="EMBL" id="CP000950">
    <property type="protein sequence ID" value="ACA68381.1"/>
    <property type="molecule type" value="Genomic_DNA"/>
</dbReference>
<dbReference type="RefSeq" id="WP_002211677.1">
    <property type="nucleotide sequence ID" value="NZ_CP009792.1"/>
</dbReference>
<dbReference type="SMR" id="B1JLG2"/>
<dbReference type="GeneID" id="57976510"/>
<dbReference type="KEGG" id="ypy:YPK_2095"/>
<dbReference type="PATRIC" id="fig|502800.11.peg.2771"/>
<dbReference type="GO" id="GO:0005737">
    <property type="term" value="C:cytoplasm"/>
    <property type="evidence" value="ECO:0007669"/>
    <property type="project" value="TreeGrafter"/>
</dbReference>
<dbReference type="GO" id="GO:0033743">
    <property type="term" value="F:peptide-methionine (R)-S-oxide reductase activity"/>
    <property type="evidence" value="ECO:0007669"/>
    <property type="project" value="UniProtKB-UniRule"/>
</dbReference>
<dbReference type="GO" id="GO:0008270">
    <property type="term" value="F:zinc ion binding"/>
    <property type="evidence" value="ECO:0007669"/>
    <property type="project" value="UniProtKB-UniRule"/>
</dbReference>
<dbReference type="GO" id="GO:0030091">
    <property type="term" value="P:protein repair"/>
    <property type="evidence" value="ECO:0007669"/>
    <property type="project" value="InterPro"/>
</dbReference>
<dbReference type="GO" id="GO:0006979">
    <property type="term" value="P:response to oxidative stress"/>
    <property type="evidence" value="ECO:0007669"/>
    <property type="project" value="InterPro"/>
</dbReference>
<dbReference type="FunFam" id="2.170.150.20:FF:000001">
    <property type="entry name" value="Peptide methionine sulfoxide reductase MsrB"/>
    <property type="match status" value="1"/>
</dbReference>
<dbReference type="Gene3D" id="2.170.150.20">
    <property type="entry name" value="Peptide methionine sulfoxide reductase"/>
    <property type="match status" value="1"/>
</dbReference>
<dbReference type="HAMAP" id="MF_01400">
    <property type="entry name" value="MsrB"/>
    <property type="match status" value="1"/>
</dbReference>
<dbReference type="InterPro" id="IPR028427">
    <property type="entry name" value="Met_Sox_Rdtase_MsrB"/>
</dbReference>
<dbReference type="InterPro" id="IPR002579">
    <property type="entry name" value="Met_Sox_Rdtase_MsrB_dom"/>
</dbReference>
<dbReference type="InterPro" id="IPR011057">
    <property type="entry name" value="Mss4-like_sf"/>
</dbReference>
<dbReference type="NCBIfam" id="TIGR00357">
    <property type="entry name" value="peptide-methionine (R)-S-oxide reductase MsrB"/>
    <property type="match status" value="1"/>
</dbReference>
<dbReference type="PANTHER" id="PTHR10173">
    <property type="entry name" value="METHIONINE SULFOXIDE REDUCTASE"/>
    <property type="match status" value="1"/>
</dbReference>
<dbReference type="PANTHER" id="PTHR10173:SF52">
    <property type="entry name" value="METHIONINE-R-SULFOXIDE REDUCTASE B1"/>
    <property type="match status" value="1"/>
</dbReference>
<dbReference type="Pfam" id="PF01641">
    <property type="entry name" value="SelR"/>
    <property type="match status" value="1"/>
</dbReference>
<dbReference type="SUPFAM" id="SSF51316">
    <property type="entry name" value="Mss4-like"/>
    <property type="match status" value="1"/>
</dbReference>
<dbReference type="PROSITE" id="PS51790">
    <property type="entry name" value="MSRB"/>
    <property type="match status" value="1"/>
</dbReference>